<evidence type="ECO:0000250" key="1"/>
<evidence type="ECO:0000255" key="2">
    <source>
        <dbReference type="PROSITE-ProRule" id="PRU00108"/>
    </source>
</evidence>
<evidence type="ECO:0000256" key="3">
    <source>
        <dbReference type="SAM" id="MobiDB-lite"/>
    </source>
</evidence>
<evidence type="ECO:0000305" key="4"/>
<protein>
    <recommendedName>
        <fullName>Homeobox protein Hox-C6a</fullName>
    </recommendedName>
    <alternativeName>
        <fullName>FrHOXC-6</fullName>
    </alternativeName>
</protein>
<dbReference type="EMBL" id="U92572">
    <property type="protein sequence ID" value="AAB68682.1"/>
    <property type="molecule type" value="Genomic_DNA"/>
</dbReference>
<dbReference type="EMBL" id="DQ481667">
    <property type="protein sequence ID" value="ABF22446.1"/>
    <property type="molecule type" value="Genomic_DNA"/>
</dbReference>
<dbReference type="SMR" id="O42504"/>
<dbReference type="FunCoup" id="O42504">
    <property type="interactions" value="627"/>
</dbReference>
<dbReference type="STRING" id="31033.ENSTRUP00000008754"/>
<dbReference type="Ensembl" id="ENSTRUT00000008805.3">
    <property type="protein sequence ID" value="ENSTRUP00000008754.3"/>
    <property type="gene ID" value="ENSTRUG00000022036.2"/>
</dbReference>
<dbReference type="GeneID" id="101078451"/>
<dbReference type="KEGG" id="tru:101078451"/>
<dbReference type="CTD" id="30346"/>
<dbReference type="eggNOG" id="KOG0487">
    <property type="taxonomic scope" value="Eukaryota"/>
</dbReference>
<dbReference type="eggNOG" id="KOG0489">
    <property type="taxonomic scope" value="Eukaryota"/>
</dbReference>
<dbReference type="GeneTree" id="ENSGT00940000159254"/>
<dbReference type="InParanoid" id="O42504"/>
<dbReference type="OMA" id="RIYTPFY"/>
<dbReference type="OrthoDB" id="6159439at2759"/>
<dbReference type="Proteomes" id="UP000005226">
    <property type="component" value="Chromosome 3"/>
</dbReference>
<dbReference type="GO" id="GO:0005634">
    <property type="term" value="C:nucleus"/>
    <property type="evidence" value="ECO:0007669"/>
    <property type="project" value="UniProtKB-SubCell"/>
</dbReference>
<dbReference type="GO" id="GO:0000981">
    <property type="term" value="F:DNA-binding transcription factor activity, RNA polymerase II-specific"/>
    <property type="evidence" value="ECO:0007669"/>
    <property type="project" value="InterPro"/>
</dbReference>
<dbReference type="GO" id="GO:0000978">
    <property type="term" value="F:RNA polymerase II cis-regulatory region sequence-specific DNA binding"/>
    <property type="evidence" value="ECO:0007669"/>
    <property type="project" value="TreeGrafter"/>
</dbReference>
<dbReference type="GO" id="GO:0009952">
    <property type="term" value="P:anterior/posterior pattern specification"/>
    <property type="evidence" value="ECO:0007669"/>
    <property type="project" value="TreeGrafter"/>
</dbReference>
<dbReference type="CDD" id="cd00086">
    <property type="entry name" value="homeodomain"/>
    <property type="match status" value="1"/>
</dbReference>
<dbReference type="FunFam" id="1.10.10.60:FF:000879">
    <property type="match status" value="1"/>
</dbReference>
<dbReference type="Gene3D" id="1.10.10.60">
    <property type="entry name" value="Homeodomain-like"/>
    <property type="match status" value="1"/>
</dbReference>
<dbReference type="InterPro" id="IPR050296">
    <property type="entry name" value="Antp_homeobox"/>
</dbReference>
<dbReference type="InterPro" id="IPR001356">
    <property type="entry name" value="HD"/>
</dbReference>
<dbReference type="InterPro" id="IPR020479">
    <property type="entry name" value="HD_metazoa"/>
</dbReference>
<dbReference type="InterPro" id="IPR001827">
    <property type="entry name" value="Homeobox_Antennapedia_CS"/>
</dbReference>
<dbReference type="InterPro" id="IPR017970">
    <property type="entry name" value="Homeobox_CS"/>
</dbReference>
<dbReference type="InterPro" id="IPR009057">
    <property type="entry name" value="Homeodomain-like_sf"/>
</dbReference>
<dbReference type="PANTHER" id="PTHR45659">
    <property type="entry name" value="HOMEOBOX PROTEIN HOX"/>
    <property type="match status" value="1"/>
</dbReference>
<dbReference type="PANTHER" id="PTHR45659:SF1">
    <property type="entry name" value="HOMEOBOX PROTEIN HOX-C6"/>
    <property type="match status" value="1"/>
</dbReference>
<dbReference type="Pfam" id="PF00046">
    <property type="entry name" value="Homeodomain"/>
    <property type="match status" value="1"/>
</dbReference>
<dbReference type="PRINTS" id="PR00024">
    <property type="entry name" value="HOMEOBOX"/>
</dbReference>
<dbReference type="SMART" id="SM00389">
    <property type="entry name" value="HOX"/>
    <property type="match status" value="1"/>
</dbReference>
<dbReference type="SUPFAM" id="SSF46689">
    <property type="entry name" value="Homeodomain-like"/>
    <property type="match status" value="1"/>
</dbReference>
<dbReference type="PROSITE" id="PS00032">
    <property type="entry name" value="ANTENNAPEDIA"/>
    <property type="match status" value="1"/>
</dbReference>
<dbReference type="PROSITE" id="PS00027">
    <property type="entry name" value="HOMEOBOX_1"/>
    <property type="match status" value="1"/>
</dbReference>
<dbReference type="PROSITE" id="PS50071">
    <property type="entry name" value="HOMEOBOX_2"/>
    <property type="match status" value="1"/>
</dbReference>
<proteinExistence type="inferred from homology"/>
<gene>
    <name type="primary">hoxc6a</name>
    <name type="synonym">hoxc6</name>
</gene>
<reference key="1">
    <citation type="journal article" date="1997" name="Nat. Genet.">
        <title>Organization of the Fugu rubripes Hox clusters: evidence for continuing evolution of vertebrate Hox complexes.</title>
        <authorList>
            <person name="Aparicio S.J."/>
            <person name="Hawker K."/>
            <person name="Cottage A."/>
            <person name="Mikawa Y."/>
            <person name="Zuo L."/>
            <person name="Venkatesh B."/>
            <person name="Chen E."/>
            <person name="Krumlauf R."/>
            <person name="Brenner S."/>
        </authorList>
    </citation>
    <scope>NUCLEOTIDE SEQUENCE [GENOMIC DNA]</scope>
</reference>
<reference key="2">
    <citation type="journal article" date="2006" name="Proc. Natl. Acad. Sci. U.S.A.">
        <title>Highly conserved syntenic blocks at the vertebrate Hox loci and conserved regulatory elements within and outside Hox gene clusters.</title>
        <authorList>
            <person name="Lee A.P."/>
            <person name="Koh E.G.L."/>
            <person name="Tay A."/>
            <person name="Brenner S."/>
            <person name="Venkatesh B."/>
        </authorList>
    </citation>
    <scope>NUCLEOTIDE SEQUENCE [GENOMIC DNA]</scope>
</reference>
<organism>
    <name type="scientific">Takifugu rubripes</name>
    <name type="common">Japanese pufferfish</name>
    <name type="synonym">Fugu rubripes</name>
    <dbReference type="NCBI Taxonomy" id="31033"/>
    <lineage>
        <taxon>Eukaryota</taxon>
        <taxon>Metazoa</taxon>
        <taxon>Chordata</taxon>
        <taxon>Craniata</taxon>
        <taxon>Vertebrata</taxon>
        <taxon>Euteleostomi</taxon>
        <taxon>Actinopterygii</taxon>
        <taxon>Neopterygii</taxon>
        <taxon>Teleostei</taxon>
        <taxon>Neoteleostei</taxon>
        <taxon>Acanthomorphata</taxon>
        <taxon>Eupercaria</taxon>
        <taxon>Tetraodontiformes</taxon>
        <taxon>Tetradontoidea</taxon>
        <taxon>Tetraodontidae</taxon>
        <taxon>Takifugu</taxon>
    </lineage>
</organism>
<sequence>MNSYFANPSLSCHLSGGQDVLPNVPLNSTTYDTVRHFSSYGAAVTQNRIYAPFYSPQDNVVFGSGRAQYDYGSNVFLQDKDVLPSCRQTNMGLSTQSHIAQEYSLDQGRTGTQEQKSNIPIYPWMQRMNSHSGVGYGTDRRRGRQIYSRYQTLELEKEFHFNRYLTRRRRIEIANALCLTERQIKIWFQNRRMKWKKESNLTSTVTGSEQTGGSQEEREDRGGATEEGKDEDKKKE</sequence>
<name>HXC6A_TAKRU</name>
<accession>O42504</accession>
<keyword id="KW-0217">Developmental protein</keyword>
<keyword id="KW-0238">DNA-binding</keyword>
<keyword id="KW-0371">Homeobox</keyword>
<keyword id="KW-0539">Nucleus</keyword>
<keyword id="KW-1185">Reference proteome</keyword>
<keyword id="KW-0804">Transcription</keyword>
<keyword id="KW-0805">Transcription regulation</keyword>
<feature type="chain" id="PRO_0000265988" description="Homeobox protein Hox-C6a">
    <location>
        <begin position="1"/>
        <end position="236"/>
    </location>
</feature>
<feature type="DNA-binding region" description="Homeobox" evidence="2">
    <location>
        <begin position="140"/>
        <end position="199"/>
    </location>
</feature>
<feature type="region of interest" description="Disordered" evidence="3">
    <location>
        <begin position="198"/>
        <end position="236"/>
    </location>
</feature>
<feature type="short sequence motif" description="Antp-type hexapeptide">
    <location>
        <begin position="121"/>
        <end position="126"/>
    </location>
</feature>
<feature type="compositionally biased region" description="Polar residues" evidence="3">
    <location>
        <begin position="200"/>
        <end position="214"/>
    </location>
</feature>
<feature type="compositionally biased region" description="Basic and acidic residues" evidence="3">
    <location>
        <begin position="215"/>
        <end position="236"/>
    </location>
</feature>
<comment type="function">
    <text evidence="1">Sequence-specific transcription factor which is part of a developmental regulatory system that provides cells with specific positional identities on the anterior-posterior axis.</text>
</comment>
<comment type="subcellular location">
    <subcellularLocation>
        <location evidence="2">Nucleus</location>
    </subcellularLocation>
</comment>
<comment type="similarity">
    <text evidence="4">Belongs to the Antp homeobox family.</text>
</comment>